<organism>
    <name type="scientific">Schizosaccharomyces pombe (strain 972 / ATCC 24843)</name>
    <name type="common">Fission yeast</name>
    <dbReference type="NCBI Taxonomy" id="284812"/>
    <lineage>
        <taxon>Eukaryota</taxon>
        <taxon>Fungi</taxon>
        <taxon>Dikarya</taxon>
        <taxon>Ascomycota</taxon>
        <taxon>Taphrinomycotina</taxon>
        <taxon>Schizosaccharomycetes</taxon>
        <taxon>Schizosaccharomycetales</taxon>
        <taxon>Schizosaccharomycetaceae</taxon>
        <taxon>Schizosaccharomyces</taxon>
    </lineage>
</organism>
<reference key="1">
    <citation type="journal article" date="2002" name="Nature">
        <title>The genome sequence of Schizosaccharomyces pombe.</title>
        <authorList>
            <person name="Wood V."/>
            <person name="Gwilliam R."/>
            <person name="Rajandream M.A."/>
            <person name="Lyne M.H."/>
            <person name="Lyne R."/>
            <person name="Stewart A."/>
            <person name="Sgouros J.G."/>
            <person name="Peat N."/>
            <person name="Hayles J."/>
            <person name="Baker S.G."/>
            <person name="Basham D."/>
            <person name="Bowman S."/>
            <person name="Brooks K."/>
            <person name="Brown D."/>
            <person name="Brown S."/>
            <person name="Chillingworth T."/>
            <person name="Churcher C.M."/>
            <person name="Collins M."/>
            <person name="Connor R."/>
            <person name="Cronin A."/>
            <person name="Davis P."/>
            <person name="Feltwell T."/>
            <person name="Fraser A."/>
            <person name="Gentles S."/>
            <person name="Goble A."/>
            <person name="Hamlin N."/>
            <person name="Harris D.E."/>
            <person name="Hidalgo J."/>
            <person name="Hodgson G."/>
            <person name="Holroyd S."/>
            <person name="Hornsby T."/>
            <person name="Howarth S."/>
            <person name="Huckle E.J."/>
            <person name="Hunt S."/>
            <person name="Jagels K."/>
            <person name="James K.D."/>
            <person name="Jones L."/>
            <person name="Jones M."/>
            <person name="Leather S."/>
            <person name="McDonald S."/>
            <person name="McLean J."/>
            <person name="Mooney P."/>
            <person name="Moule S."/>
            <person name="Mungall K.L."/>
            <person name="Murphy L.D."/>
            <person name="Niblett D."/>
            <person name="Odell C."/>
            <person name="Oliver K."/>
            <person name="O'Neil S."/>
            <person name="Pearson D."/>
            <person name="Quail M.A."/>
            <person name="Rabbinowitsch E."/>
            <person name="Rutherford K.M."/>
            <person name="Rutter S."/>
            <person name="Saunders D."/>
            <person name="Seeger K."/>
            <person name="Sharp S."/>
            <person name="Skelton J."/>
            <person name="Simmonds M.N."/>
            <person name="Squares R."/>
            <person name="Squares S."/>
            <person name="Stevens K."/>
            <person name="Taylor K."/>
            <person name="Taylor R.G."/>
            <person name="Tivey A."/>
            <person name="Walsh S.V."/>
            <person name="Warren T."/>
            <person name="Whitehead S."/>
            <person name="Woodward J.R."/>
            <person name="Volckaert G."/>
            <person name="Aert R."/>
            <person name="Robben J."/>
            <person name="Grymonprez B."/>
            <person name="Weltjens I."/>
            <person name="Vanstreels E."/>
            <person name="Rieger M."/>
            <person name="Schaefer M."/>
            <person name="Mueller-Auer S."/>
            <person name="Gabel C."/>
            <person name="Fuchs M."/>
            <person name="Duesterhoeft A."/>
            <person name="Fritzc C."/>
            <person name="Holzer E."/>
            <person name="Moestl D."/>
            <person name="Hilbert H."/>
            <person name="Borzym K."/>
            <person name="Langer I."/>
            <person name="Beck A."/>
            <person name="Lehrach H."/>
            <person name="Reinhardt R."/>
            <person name="Pohl T.M."/>
            <person name="Eger P."/>
            <person name="Zimmermann W."/>
            <person name="Wedler H."/>
            <person name="Wambutt R."/>
            <person name="Purnelle B."/>
            <person name="Goffeau A."/>
            <person name="Cadieu E."/>
            <person name="Dreano S."/>
            <person name="Gloux S."/>
            <person name="Lelaure V."/>
            <person name="Mottier S."/>
            <person name="Galibert F."/>
            <person name="Aves S.J."/>
            <person name="Xiang Z."/>
            <person name="Hunt C."/>
            <person name="Moore K."/>
            <person name="Hurst S.M."/>
            <person name="Lucas M."/>
            <person name="Rochet M."/>
            <person name="Gaillardin C."/>
            <person name="Tallada V.A."/>
            <person name="Garzon A."/>
            <person name="Thode G."/>
            <person name="Daga R.R."/>
            <person name="Cruzado L."/>
            <person name="Jimenez J."/>
            <person name="Sanchez M."/>
            <person name="del Rey F."/>
            <person name="Benito J."/>
            <person name="Dominguez A."/>
            <person name="Revuelta J.L."/>
            <person name="Moreno S."/>
            <person name="Armstrong J."/>
            <person name="Forsburg S.L."/>
            <person name="Cerutti L."/>
            <person name="Lowe T."/>
            <person name="McCombie W.R."/>
            <person name="Paulsen I."/>
            <person name="Potashkin J."/>
            <person name="Shpakovski G.V."/>
            <person name="Ussery D."/>
            <person name="Barrell B.G."/>
            <person name="Nurse P."/>
        </authorList>
    </citation>
    <scope>NUCLEOTIDE SEQUENCE [LARGE SCALE GENOMIC DNA]</scope>
    <source>
        <strain>972 / ATCC 24843</strain>
    </source>
</reference>
<gene>
    <name type="ORF">SPAC4F8.11</name>
</gene>
<proteinExistence type="predicted"/>
<sequence>MPSRNSNVLQRPTYAQLASTSVKSSKGLVSYQDWVVDVKASISAISVNKSRTKVGVAGRELLKVLAVNPNSSKPPVCISDLLQKSTQTKHISCNDVKWGSSFASNLIFTCSPLGNLNVWDVNLEALLYDFNEHSRAVHKLDISSFHPSYVLTASQDGLIKLWDYKESSSTITFRGNSEAARDVVFSPSEPNEFVAAYDSGILQKWDIRFPKLPFLKLAAHNGVVLCVNYSPNGVFLASCGRDKTIRIWDSTSNKKKSLITINNVSPLNCVRWRPANQQSRGSNQLASSSLVGDTAINVWDITRPYIPYRTVSCHDSIVSTMHWASTELLWSCSKDGIFSQTRVENAFNCIDMLPRATSSWSTKNSLVFSSNPISNQRLSSLNRVASFESNISSLKSALYASQNSDGSTSNPVPFVPHNFVGIPQELGILAYRSEDVAQFCYLAKNYRISGDISSACKENAFFARNVGAEFAYQIWDALYFSLGVLNNSDKGISELINIPFVSANNSMADDEKGRNLKNLTQISTSSTPAHDNLSLNDFFEPREASTPSESSNSSIESEDNLDKAVLNKQSQWHDLENPIVLKKGQAPVNNFSTDSRASINSSYLLDSAASNYSGTSHNEMFNSFHRSSVTSASIKSREAVLSAGNSSRRASIFLDQLSLHGDTDSEIPIDDLPPIELPYVVTSIISDCISRGDVQTAACVCSVFSYLTIDLPRIQLDDLLESYVDLLRRFGMFSEATLLINMSGSKNLKYIHSSSRDLIFEMENKKATGNEQSEKGKENAKTVTSLKKCVYCELPLRGVLVYPPVCGHIGHESCLRSWYFDNTDDALPVCPVPGCGVKLLDKRALI</sequence>
<accession>O14186</accession>
<evidence type="ECO:0000256" key="1">
    <source>
        <dbReference type="SAM" id="MobiDB-lite"/>
    </source>
</evidence>
<name>YDSB_SCHPO</name>
<dbReference type="EMBL" id="CU329670">
    <property type="protein sequence ID" value="CAB11058.1"/>
    <property type="molecule type" value="Genomic_DNA"/>
</dbReference>
<dbReference type="PIR" id="T38840">
    <property type="entry name" value="T38840"/>
</dbReference>
<dbReference type="SMR" id="O14186"/>
<dbReference type="BioGRID" id="279936">
    <property type="interactions" value="6"/>
</dbReference>
<dbReference type="FunCoup" id="O14186">
    <property type="interactions" value="334"/>
</dbReference>
<dbReference type="STRING" id="284812.O14186"/>
<dbReference type="iPTMnet" id="O14186"/>
<dbReference type="PaxDb" id="4896-SPAC4F8.11.1"/>
<dbReference type="EnsemblFungi" id="SPAC4F8.11.1">
    <property type="protein sequence ID" value="SPAC4F8.11.1:pep"/>
    <property type="gene ID" value="SPAC4F8.11"/>
</dbReference>
<dbReference type="KEGG" id="spo:2543518"/>
<dbReference type="PomBase" id="SPAC4F8.11"/>
<dbReference type="VEuPathDB" id="FungiDB:SPAC4F8.11"/>
<dbReference type="eggNOG" id="KOG0269">
    <property type="taxonomic scope" value="Eukaryota"/>
</dbReference>
<dbReference type="HOGENOM" id="CLU_341047_0_0_1"/>
<dbReference type="InParanoid" id="O14186"/>
<dbReference type="OMA" id="CNDVKWG"/>
<dbReference type="PhylomeDB" id="O14186"/>
<dbReference type="PRO" id="PR:O14186"/>
<dbReference type="Proteomes" id="UP000002485">
    <property type="component" value="Chromosome I"/>
</dbReference>
<dbReference type="GO" id="GO:0005829">
    <property type="term" value="C:cytosol"/>
    <property type="evidence" value="ECO:0007005"/>
    <property type="project" value="PomBase"/>
</dbReference>
<dbReference type="GO" id="GO:0061700">
    <property type="term" value="C:GATOR2 complex"/>
    <property type="evidence" value="ECO:0000353"/>
    <property type="project" value="PomBase"/>
</dbReference>
<dbReference type="GO" id="GO:0005774">
    <property type="term" value="C:vacuolar membrane"/>
    <property type="evidence" value="ECO:0000269"/>
    <property type="project" value="PomBase"/>
</dbReference>
<dbReference type="GO" id="GO:0016239">
    <property type="term" value="P:positive regulation of macroautophagy"/>
    <property type="evidence" value="ECO:0000318"/>
    <property type="project" value="GO_Central"/>
</dbReference>
<dbReference type="GO" id="GO:1904263">
    <property type="term" value="P:positive regulation of TORC1 signaling"/>
    <property type="evidence" value="ECO:0000318"/>
    <property type="project" value="GO_Central"/>
</dbReference>
<dbReference type="CDD" id="cd16488">
    <property type="entry name" value="mRING-H2-C3H3C2_Mio-like"/>
    <property type="match status" value="1"/>
</dbReference>
<dbReference type="FunFam" id="2.130.10.10:FF:002920">
    <property type="entry name" value="Uncharacterized WD repeat-containing protein C4F8.11"/>
    <property type="match status" value="1"/>
</dbReference>
<dbReference type="Gene3D" id="2.130.10.10">
    <property type="entry name" value="YVTN repeat-like/Quinoprotein amine dehydrogenase"/>
    <property type="match status" value="2"/>
</dbReference>
<dbReference type="InterPro" id="IPR015943">
    <property type="entry name" value="WD40/YVTN_repeat-like_dom_sf"/>
</dbReference>
<dbReference type="InterPro" id="IPR036322">
    <property type="entry name" value="WD40_repeat_dom_sf"/>
</dbReference>
<dbReference type="InterPro" id="IPR001680">
    <property type="entry name" value="WD40_rpt"/>
</dbReference>
<dbReference type="InterPro" id="IPR037590">
    <property type="entry name" value="WDR24"/>
</dbReference>
<dbReference type="InterPro" id="IPR049566">
    <property type="entry name" value="WDR59_RTC1-like_RING_Znf"/>
</dbReference>
<dbReference type="PANTHER" id="PTHR46200">
    <property type="entry name" value="GATOR COMPLEX PROTEIN WDR24"/>
    <property type="match status" value="1"/>
</dbReference>
<dbReference type="PANTHER" id="PTHR46200:SF1">
    <property type="entry name" value="GATOR COMPLEX PROTEIN WDR24"/>
    <property type="match status" value="1"/>
</dbReference>
<dbReference type="Pfam" id="PF00400">
    <property type="entry name" value="WD40"/>
    <property type="match status" value="2"/>
</dbReference>
<dbReference type="Pfam" id="PF17120">
    <property type="entry name" value="zf-RING_16"/>
    <property type="match status" value="1"/>
</dbReference>
<dbReference type="SMART" id="SM00320">
    <property type="entry name" value="WD40"/>
    <property type="match status" value="6"/>
</dbReference>
<dbReference type="SUPFAM" id="SSF57850">
    <property type="entry name" value="RING/U-box"/>
    <property type="match status" value="1"/>
</dbReference>
<dbReference type="SUPFAM" id="SSF50978">
    <property type="entry name" value="WD40 repeat-like"/>
    <property type="match status" value="1"/>
</dbReference>
<dbReference type="PROSITE" id="PS00678">
    <property type="entry name" value="WD_REPEATS_1"/>
    <property type="match status" value="2"/>
</dbReference>
<dbReference type="PROSITE" id="PS50082">
    <property type="entry name" value="WD_REPEATS_2"/>
    <property type="match status" value="2"/>
</dbReference>
<dbReference type="PROSITE" id="PS50294">
    <property type="entry name" value="WD_REPEATS_REGION"/>
    <property type="match status" value="1"/>
</dbReference>
<keyword id="KW-1185">Reference proteome</keyword>
<keyword id="KW-0677">Repeat</keyword>
<keyword id="KW-0853">WD repeat</keyword>
<protein>
    <recommendedName>
        <fullName>Uncharacterized WD repeat-containing protein C4F8.11</fullName>
    </recommendedName>
</protein>
<feature type="chain" id="PRO_0000051494" description="Uncharacterized WD repeat-containing protein C4F8.11">
    <location>
        <begin position="1"/>
        <end position="846"/>
    </location>
</feature>
<feature type="repeat" description="WD 1">
    <location>
        <begin position="88"/>
        <end position="129"/>
    </location>
</feature>
<feature type="repeat" description="WD 2">
    <location>
        <begin position="132"/>
        <end position="172"/>
    </location>
</feature>
<feature type="repeat" description="WD 3">
    <location>
        <begin position="175"/>
        <end position="215"/>
    </location>
</feature>
<feature type="repeat" description="WD 4">
    <location>
        <begin position="219"/>
        <end position="258"/>
    </location>
</feature>
<feature type="repeat" description="WD 5">
    <location>
        <begin position="262"/>
        <end position="309"/>
    </location>
</feature>
<feature type="repeat" description="WD 6">
    <location>
        <begin position="313"/>
        <end position="348"/>
    </location>
</feature>
<feature type="repeat" description="WD 7">
    <location>
        <begin position="624"/>
        <end position="663"/>
    </location>
</feature>
<feature type="region of interest" description="Disordered" evidence="1">
    <location>
        <begin position="541"/>
        <end position="560"/>
    </location>
</feature>
<feature type="compositionally biased region" description="Low complexity" evidence="1">
    <location>
        <begin position="544"/>
        <end position="555"/>
    </location>
</feature>